<protein>
    <recommendedName>
        <fullName evidence="2">Elongation factor Tu</fullName>
        <shortName evidence="2">EF-Tu</shortName>
        <ecNumber evidence="2">3.6.5.3</ecNumber>
    </recommendedName>
</protein>
<reference key="1">
    <citation type="journal article" date="2011" name="PLoS ONE">
        <title>The genome of Akkermansia muciniphila, a dedicated intestinal mucin degrader, and its use in exploring intestinal metagenomes.</title>
        <authorList>
            <person name="van Passel M.W."/>
            <person name="Kant R."/>
            <person name="Zoetendal E.G."/>
            <person name="Plugge C.M."/>
            <person name="Derrien M."/>
            <person name="Malfatti S.A."/>
            <person name="Chain P.S."/>
            <person name="Woyke T."/>
            <person name="Palva A."/>
            <person name="de Vos W.M."/>
            <person name="Smidt H."/>
        </authorList>
    </citation>
    <scope>NUCLEOTIDE SEQUENCE [LARGE SCALE GENOMIC DNA]</scope>
    <source>
        <strain>ATCC BAA-835 / DSM 22959 / JCM 33894 / BCRC 81048 / CCUG 64013 / CIP 107961 / Muc</strain>
    </source>
</reference>
<accession>B2UQY9</accession>
<organism>
    <name type="scientific">Akkermansia muciniphila (strain ATCC BAA-835 / DSM 22959 / JCM 33894 / BCRC 81048 / CCUG 64013 / CIP 107961 / Muc)</name>
    <dbReference type="NCBI Taxonomy" id="349741"/>
    <lineage>
        <taxon>Bacteria</taxon>
        <taxon>Pseudomonadati</taxon>
        <taxon>Verrucomicrobiota</taxon>
        <taxon>Verrucomicrobiia</taxon>
        <taxon>Verrucomicrobiales</taxon>
        <taxon>Akkermansiaceae</taxon>
        <taxon>Akkermansia</taxon>
    </lineage>
</organism>
<keyword id="KW-0963">Cytoplasm</keyword>
<keyword id="KW-0251">Elongation factor</keyword>
<keyword id="KW-0342">GTP-binding</keyword>
<keyword id="KW-0378">Hydrolase</keyword>
<keyword id="KW-0460">Magnesium</keyword>
<keyword id="KW-0479">Metal-binding</keyword>
<keyword id="KW-0547">Nucleotide-binding</keyword>
<keyword id="KW-0648">Protein biosynthesis</keyword>
<keyword id="KW-1185">Reference proteome</keyword>
<name>EFTU_AKKM8</name>
<proteinExistence type="inferred from homology"/>
<feature type="chain" id="PRO_1000095045" description="Elongation factor Tu">
    <location>
        <begin position="1"/>
        <end position="394"/>
    </location>
</feature>
<feature type="domain" description="tr-type G">
    <location>
        <begin position="10"/>
        <end position="204"/>
    </location>
</feature>
<feature type="region of interest" description="G1" evidence="1">
    <location>
        <begin position="19"/>
        <end position="26"/>
    </location>
</feature>
<feature type="region of interest" description="G2" evidence="1">
    <location>
        <begin position="60"/>
        <end position="64"/>
    </location>
</feature>
<feature type="region of interest" description="G3" evidence="1">
    <location>
        <begin position="81"/>
        <end position="84"/>
    </location>
</feature>
<feature type="region of interest" description="G4" evidence="1">
    <location>
        <begin position="136"/>
        <end position="139"/>
    </location>
</feature>
<feature type="region of interest" description="G5" evidence="1">
    <location>
        <begin position="174"/>
        <end position="176"/>
    </location>
</feature>
<feature type="binding site" evidence="2">
    <location>
        <begin position="19"/>
        <end position="26"/>
    </location>
    <ligand>
        <name>GTP</name>
        <dbReference type="ChEBI" id="CHEBI:37565"/>
    </ligand>
</feature>
<feature type="binding site" evidence="2">
    <location>
        <position position="26"/>
    </location>
    <ligand>
        <name>Mg(2+)</name>
        <dbReference type="ChEBI" id="CHEBI:18420"/>
    </ligand>
</feature>
<feature type="binding site" evidence="2">
    <location>
        <begin position="81"/>
        <end position="85"/>
    </location>
    <ligand>
        <name>GTP</name>
        <dbReference type="ChEBI" id="CHEBI:37565"/>
    </ligand>
</feature>
<feature type="binding site" evidence="2">
    <location>
        <begin position="136"/>
        <end position="139"/>
    </location>
    <ligand>
        <name>GTP</name>
        <dbReference type="ChEBI" id="CHEBI:37565"/>
    </ligand>
</feature>
<sequence length="394" mass="43431">MAKEQFQRNKPHVNVGTIGHVDHGKTSLTAAITSVLAKKGFAEARGYDQIDAAPEERERGITISTAHVEYETENRHYAHVDCPGHADYVKNMITGAAQMDGAILVVAASDGPMPQTREHILLARQVGVPAIVVYMNKCDLVDDPDLLELVEMEIRELLNEYEFPGDDTPIIKGSAVKALEGDAAAEDSIMELMAAVDSYIPQPERPVDQPFLMPVEDVFSISGRGTVATGRIERGVIKKMEEVEIIGIKDTQKTAVTDIEMFRKLLDEGQAGDNVGLLLRGLKKEDIERGQVIIKPGTVKPHKNFKAEVYVLTKEEGGRHTPFFNNYRPQFYFRTTDVTGCCTLPEGVEMVMPGDNVNLEVQLITPIAMEKAMRFAIREGGRTVGAGRISEILD</sequence>
<evidence type="ECO:0000250" key="1"/>
<evidence type="ECO:0000255" key="2">
    <source>
        <dbReference type="HAMAP-Rule" id="MF_00118"/>
    </source>
</evidence>
<gene>
    <name evidence="2" type="primary">tuf</name>
    <name type="ordered locus">Amuc_1048</name>
</gene>
<comment type="function">
    <text evidence="2">GTP hydrolase that promotes the GTP-dependent binding of aminoacyl-tRNA to the A-site of ribosomes during protein biosynthesis.</text>
</comment>
<comment type="catalytic activity">
    <reaction evidence="2">
        <text>GTP + H2O = GDP + phosphate + H(+)</text>
        <dbReference type="Rhea" id="RHEA:19669"/>
        <dbReference type="ChEBI" id="CHEBI:15377"/>
        <dbReference type="ChEBI" id="CHEBI:15378"/>
        <dbReference type="ChEBI" id="CHEBI:37565"/>
        <dbReference type="ChEBI" id="CHEBI:43474"/>
        <dbReference type="ChEBI" id="CHEBI:58189"/>
        <dbReference type="EC" id="3.6.5.3"/>
    </reaction>
    <physiologicalReaction direction="left-to-right" evidence="2">
        <dbReference type="Rhea" id="RHEA:19670"/>
    </physiologicalReaction>
</comment>
<comment type="subunit">
    <text evidence="2">Monomer.</text>
</comment>
<comment type="subcellular location">
    <subcellularLocation>
        <location evidence="2">Cytoplasm</location>
    </subcellularLocation>
</comment>
<comment type="similarity">
    <text evidence="2">Belongs to the TRAFAC class translation factor GTPase superfamily. Classic translation factor GTPase family. EF-Tu/EF-1A subfamily.</text>
</comment>
<dbReference type="EC" id="3.6.5.3" evidence="2"/>
<dbReference type="EMBL" id="CP001071">
    <property type="protein sequence ID" value="ACD04874.1"/>
    <property type="molecule type" value="Genomic_DNA"/>
</dbReference>
<dbReference type="RefSeq" id="WP_012420089.1">
    <property type="nucleotide sequence ID" value="NZ_CP071807.1"/>
</dbReference>
<dbReference type="SMR" id="B2UQY9"/>
<dbReference type="STRING" id="349741.Amuc_1048"/>
<dbReference type="PaxDb" id="349741-Amuc_1048"/>
<dbReference type="GeneID" id="60880517"/>
<dbReference type="KEGG" id="amu:Amuc_1048"/>
<dbReference type="eggNOG" id="COG0050">
    <property type="taxonomic scope" value="Bacteria"/>
</dbReference>
<dbReference type="HOGENOM" id="CLU_007265_0_1_0"/>
<dbReference type="OrthoDB" id="9804504at2"/>
<dbReference type="BioCyc" id="AMUC349741:G1GBX-1120-MONOMER"/>
<dbReference type="Proteomes" id="UP000001031">
    <property type="component" value="Chromosome"/>
</dbReference>
<dbReference type="GO" id="GO:0005829">
    <property type="term" value="C:cytosol"/>
    <property type="evidence" value="ECO:0007669"/>
    <property type="project" value="TreeGrafter"/>
</dbReference>
<dbReference type="GO" id="GO:0005525">
    <property type="term" value="F:GTP binding"/>
    <property type="evidence" value="ECO:0007669"/>
    <property type="project" value="UniProtKB-UniRule"/>
</dbReference>
<dbReference type="GO" id="GO:0003924">
    <property type="term" value="F:GTPase activity"/>
    <property type="evidence" value="ECO:0007669"/>
    <property type="project" value="InterPro"/>
</dbReference>
<dbReference type="GO" id="GO:0003746">
    <property type="term" value="F:translation elongation factor activity"/>
    <property type="evidence" value="ECO:0007669"/>
    <property type="project" value="UniProtKB-UniRule"/>
</dbReference>
<dbReference type="CDD" id="cd01884">
    <property type="entry name" value="EF_Tu"/>
    <property type="match status" value="1"/>
</dbReference>
<dbReference type="CDD" id="cd03697">
    <property type="entry name" value="EFTU_II"/>
    <property type="match status" value="1"/>
</dbReference>
<dbReference type="CDD" id="cd03707">
    <property type="entry name" value="EFTU_III"/>
    <property type="match status" value="1"/>
</dbReference>
<dbReference type="FunFam" id="2.40.30.10:FF:000001">
    <property type="entry name" value="Elongation factor Tu"/>
    <property type="match status" value="1"/>
</dbReference>
<dbReference type="FunFam" id="3.40.50.300:FF:000003">
    <property type="entry name" value="Elongation factor Tu"/>
    <property type="match status" value="1"/>
</dbReference>
<dbReference type="Gene3D" id="3.40.50.300">
    <property type="entry name" value="P-loop containing nucleotide triphosphate hydrolases"/>
    <property type="match status" value="1"/>
</dbReference>
<dbReference type="Gene3D" id="2.40.30.10">
    <property type="entry name" value="Translation factors"/>
    <property type="match status" value="2"/>
</dbReference>
<dbReference type="HAMAP" id="MF_00118_B">
    <property type="entry name" value="EF_Tu_B"/>
    <property type="match status" value="1"/>
</dbReference>
<dbReference type="InterPro" id="IPR041709">
    <property type="entry name" value="EF-Tu_GTP-bd"/>
</dbReference>
<dbReference type="InterPro" id="IPR050055">
    <property type="entry name" value="EF-Tu_GTPase"/>
</dbReference>
<dbReference type="InterPro" id="IPR004161">
    <property type="entry name" value="EFTu-like_2"/>
</dbReference>
<dbReference type="InterPro" id="IPR033720">
    <property type="entry name" value="EFTU_2"/>
</dbReference>
<dbReference type="InterPro" id="IPR031157">
    <property type="entry name" value="G_TR_CS"/>
</dbReference>
<dbReference type="InterPro" id="IPR027417">
    <property type="entry name" value="P-loop_NTPase"/>
</dbReference>
<dbReference type="InterPro" id="IPR005225">
    <property type="entry name" value="Small_GTP-bd"/>
</dbReference>
<dbReference type="InterPro" id="IPR000795">
    <property type="entry name" value="T_Tr_GTP-bd_dom"/>
</dbReference>
<dbReference type="InterPro" id="IPR009000">
    <property type="entry name" value="Transl_B-barrel_sf"/>
</dbReference>
<dbReference type="InterPro" id="IPR009001">
    <property type="entry name" value="Transl_elong_EF1A/Init_IF2_C"/>
</dbReference>
<dbReference type="InterPro" id="IPR004541">
    <property type="entry name" value="Transl_elong_EFTu/EF1A_bac/org"/>
</dbReference>
<dbReference type="InterPro" id="IPR004160">
    <property type="entry name" value="Transl_elong_EFTu/EF1A_C"/>
</dbReference>
<dbReference type="NCBIfam" id="TIGR00485">
    <property type="entry name" value="EF-Tu"/>
    <property type="match status" value="1"/>
</dbReference>
<dbReference type="NCBIfam" id="NF000766">
    <property type="entry name" value="PRK00049.1"/>
    <property type="match status" value="1"/>
</dbReference>
<dbReference type="NCBIfam" id="NF009372">
    <property type="entry name" value="PRK12735.1"/>
    <property type="match status" value="1"/>
</dbReference>
<dbReference type="NCBIfam" id="NF009373">
    <property type="entry name" value="PRK12736.1"/>
    <property type="match status" value="1"/>
</dbReference>
<dbReference type="NCBIfam" id="TIGR00231">
    <property type="entry name" value="small_GTP"/>
    <property type="match status" value="1"/>
</dbReference>
<dbReference type="PANTHER" id="PTHR43721:SF22">
    <property type="entry name" value="ELONGATION FACTOR TU, MITOCHONDRIAL"/>
    <property type="match status" value="1"/>
</dbReference>
<dbReference type="PANTHER" id="PTHR43721">
    <property type="entry name" value="ELONGATION FACTOR TU-RELATED"/>
    <property type="match status" value="1"/>
</dbReference>
<dbReference type="Pfam" id="PF00009">
    <property type="entry name" value="GTP_EFTU"/>
    <property type="match status" value="1"/>
</dbReference>
<dbReference type="Pfam" id="PF03144">
    <property type="entry name" value="GTP_EFTU_D2"/>
    <property type="match status" value="1"/>
</dbReference>
<dbReference type="Pfam" id="PF03143">
    <property type="entry name" value="GTP_EFTU_D3"/>
    <property type="match status" value="1"/>
</dbReference>
<dbReference type="PRINTS" id="PR00315">
    <property type="entry name" value="ELONGATNFCT"/>
</dbReference>
<dbReference type="SUPFAM" id="SSF50465">
    <property type="entry name" value="EF-Tu/eEF-1alpha/eIF2-gamma C-terminal domain"/>
    <property type="match status" value="1"/>
</dbReference>
<dbReference type="SUPFAM" id="SSF52540">
    <property type="entry name" value="P-loop containing nucleoside triphosphate hydrolases"/>
    <property type="match status" value="1"/>
</dbReference>
<dbReference type="SUPFAM" id="SSF50447">
    <property type="entry name" value="Translation proteins"/>
    <property type="match status" value="1"/>
</dbReference>
<dbReference type="PROSITE" id="PS00301">
    <property type="entry name" value="G_TR_1"/>
    <property type="match status" value="1"/>
</dbReference>
<dbReference type="PROSITE" id="PS51722">
    <property type="entry name" value="G_TR_2"/>
    <property type="match status" value="1"/>
</dbReference>